<dbReference type="EC" id="3.4.22.-" evidence="4"/>
<dbReference type="EMBL" id="AJ312234">
    <property type="protein sequence ID" value="CAC85556.1"/>
    <property type="molecule type" value="mRNA"/>
</dbReference>
<dbReference type="EMBL" id="AJ320169">
    <property type="protein sequence ID" value="CAC43939.1"/>
    <property type="molecule type" value="mRNA"/>
</dbReference>
<dbReference type="EMBL" id="AK027773">
    <property type="protein sequence ID" value="BAB55356.1"/>
    <property type="status" value="ALT_FRAME"/>
    <property type="molecule type" value="mRNA"/>
</dbReference>
<dbReference type="EMBL" id="AC103923">
    <property type="status" value="NOT_ANNOTATED_CDS"/>
    <property type="molecule type" value="Genomic_DNA"/>
</dbReference>
<dbReference type="EMBL" id="CH471059">
    <property type="protein sequence ID" value="EAX06579.1"/>
    <property type="molecule type" value="Genomic_DNA"/>
</dbReference>
<dbReference type="EMBL" id="CH471059">
    <property type="protein sequence ID" value="EAX06580.1"/>
    <property type="molecule type" value="Genomic_DNA"/>
</dbReference>
<dbReference type="EMBL" id="BC033024">
    <property type="protein sequence ID" value="AAH33024.1"/>
    <property type="molecule type" value="mRNA"/>
</dbReference>
<dbReference type="CCDS" id="CCDS623.1"/>
<dbReference type="RefSeq" id="NP_116241.2">
    <property type="nucleotide sequence ID" value="NM_032852.3"/>
</dbReference>
<dbReference type="RefSeq" id="NP_835739.1">
    <property type="nucleotide sequence ID" value="NM_178221.3"/>
</dbReference>
<dbReference type="RefSeq" id="XP_005271345.1">
    <property type="nucleotide sequence ID" value="XM_005271288.2"/>
</dbReference>
<dbReference type="SMR" id="Q96DT6"/>
<dbReference type="BioGRID" id="124372">
    <property type="interactions" value="39"/>
</dbReference>
<dbReference type="FunCoup" id="Q96DT6">
    <property type="interactions" value="183"/>
</dbReference>
<dbReference type="IntAct" id="Q96DT6">
    <property type="interactions" value="43"/>
</dbReference>
<dbReference type="STRING" id="9606.ENSP00000322159"/>
<dbReference type="MEROPS" id="C54.004"/>
<dbReference type="GlyGen" id="Q96DT6">
    <property type="glycosylation" value="1 site, 1 O-linked glycan (1 site)"/>
</dbReference>
<dbReference type="iPTMnet" id="Q96DT6"/>
<dbReference type="PhosphoSitePlus" id="Q96DT6"/>
<dbReference type="BioMuta" id="ATG4C"/>
<dbReference type="DMDM" id="61211867"/>
<dbReference type="jPOST" id="Q96DT6"/>
<dbReference type="MassIVE" id="Q96DT6"/>
<dbReference type="PaxDb" id="9606-ENSP00000322159"/>
<dbReference type="PeptideAtlas" id="Q96DT6"/>
<dbReference type="ProteomicsDB" id="76320"/>
<dbReference type="Pumba" id="Q96DT6"/>
<dbReference type="Antibodypedia" id="1971">
    <property type="antibodies" value="559 antibodies from 37 providers"/>
</dbReference>
<dbReference type="DNASU" id="84938"/>
<dbReference type="Ensembl" id="ENST00000317868.9">
    <property type="protein sequence ID" value="ENSP00000322159.4"/>
    <property type="gene ID" value="ENSG00000125703.15"/>
</dbReference>
<dbReference type="Ensembl" id="ENST00000371120.7">
    <property type="protein sequence ID" value="ENSP00000360161.3"/>
    <property type="gene ID" value="ENSG00000125703.15"/>
</dbReference>
<dbReference type="GeneID" id="84938"/>
<dbReference type="KEGG" id="hsa:84938"/>
<dbReference type="MANE-Select" id="ENST00000317868.9">
    <property type="protein sequence ID" value="ENSP00000322159.4"/>
    <property type="RefSeq nucleotide sequence ID" value="NM_032852.4"/>
    <property type="RefSeq protein sequence ID" value="NP_116241.2"/>
</dbReference>
<dbReference type="UCSC" id="uc001dat.5">
    <property type="organism name" value="human"/>
</dbReference>
<dbReference type="AGR" id="HGNC:16040"/>
<dbReference type="CTD" id="84938"/>
<dbReference type="DisGeNET" id="84938"/>
<dbReference type="GeneCards" id="ATG4C"/>
<dbReference type="HGNC" id="HGNC:16040">
    <property type="gene designation" value="ATG4C"/>
</dbReference>
<dbReference type="HPA" id="ENSG00000125703">
    <property type="expression patterns" value="Low tissue specificity"/>
</dbReference>
<dbReference type="MIM" id="611339">
    <property type="type" value="gene"/>
</dbReference>
<dbReference type="neXtProt" id="NX_Q96DT6"/>
<dbReference type="OpenTargets" id="ENSG00000125703"/>
<dbReference type="PharmGKB" id="PA25183"/>
<dbReference type="VEuPathDB" id="HostDB:ENSG00000125703"/>
<dbReference type="eggNOG" id="KOG2674">
    <property type="taxonomic scope" value="Eukaryota"/>
</dbReference>
<dbReference type="GeneTree" id="ENSGT00530000063000"/>
<dbReference type="HOGENOM" id="CLU_021259_3_2_1"/>
<dbReference type="InParanoid" id="Q96DT6"/>
<dbReference type="OMA" id="KMAGDWY"/>
<dbReference type="OrthoDB" id="2960936at2759"/>
<dbReference type="PAN-GO" id="Q96DT6">
    <property type="GO annotations" value="0 GO annotations based on evolutionary models"/>
</dbReference>
<dbReference type="PhylomeDB" id="Q96DT6"/>
<dbReference type="TreeFam" id="TF314847"/>
<dbReference type="PathwayCommons" id="Q96DT6"/>
<dbReference type="Reactome" id="R-HSA-1632852">
    <property type="pathway name" value="Macroautophagy"/>
</dbReference>
<dbReference type="SABIO-RK" id="Q96DT6"/>
<dbReference type="SignaLink" id="Q96DT6"/>
<dbReference type="BioGRID-ORCS" id="84938">
    <property type="hits" value="16 hits in 1151 CRISPR screens"/>
</dbReference>
<dbReference type="ChiTaRS" id="ATG4C">
    <property type="organism name" value="human"/>
</dbReference>
<dbReference type="GenomeRNAi" id="84938"/>
<dbReference type="Pharos" id="Q96DT6">
    <property type="development level" value="Tbio"/>
</dbReference>
<dbReference type="PRO" id="PR:Q96DT6"/>
<dbReference type="Proteomes" id="UP000005640">
    <property type="component" value="Chromosome 1"/>
</dbReference>
<dbReference type="RNAct" id="Q96DT6">
    <property type="molecule type" value="protein"/>
</dbReference>
<dbReference type="Bgee" id="ENSG00000125703">
    <property type="expression patterns" value="Expressed in corpus callosum and 175 other cell types or tissues"/>
</dbReference>
<dbReference type="ExpressionAtlas" id="Q96DT6">
    <property type="expression patterns" value="baseline and differential"/>
</dbReference>
<dbReference type="GO" id="GO:0005737">
    <property type="term" value="C:cytoplasm"/>
    <property type="evidence" value="ECO:0000318"/>
    <property type="project" value="GO_Central"/>
</dbReference>
<dbReference type="GO" id="GO:0004197">
    <property type="term" value="F:cysteine-type endopeptidase activity"/>
    <property type="evidence" value="ECO:0000314"/>
    <property type="project" value="UniProt"/>
</dbReference>
<dbReference type="GO" id="GO:0008234">
    <property type="term" value="F:cysteine-type peptidase activity"/>
    <property type="evidence" value="ECO:0000314"/>
    <property type="project" value="UniProtKB"/>
</dbReference>
<dbReference type="GO" id="GO:0019786">
    <property type="term" value="F:protein-phosphatidylethanolamide deconjugating activity"/>
    <property type="evidence" value="ECO:0000318"/>
    <property type="project" value="GO_Central"/>
</dbReference>
<dbReference type="GO" id="GO:0035973">
    <property type="term" value="P:aggrephagy"/>
    <property type="evidence" value="ECO:0000318"/>
    <property type="project" value="GO_Central"/>
</dbReference>
<dbReference type="GO" id="GO:0000045">
    <property type="term" value="P:autophagosome assembly"/>
    <property type="evidence" value="ECO:0000314"/>
    <property type="project" value="UniProt"/>
</dbReference>
<dbReference type="GO" id="GO:0006914">
    <property type="term" value="P:autophagy"/>
    <property type="evidence" value="ECO:0000314"/>
    <property type="project" value="UniProtKB"/>
</dbReference>
<dbReference type="GO" id="GO:0000423">
    <property type="term" value="P:mitophagy"/>
    <property type="evidence" value="ECO:0000318"/>
    <property type="project" value="GO_Central"/>
</dbReference>
<dbReference type="GO" id="GO:0034727">
    <property type="term" value="P:piecemeal microautophagy of the nucleus"/>
    <property type="evidence" value="ECO:0000318"/>
    <property type="project" value="GO_Central"/>
</dbReference>
<dbReference type="GO" id="GO:0051697">
    <property type="term" value="P:protein delipidation"/>
    <property type="evidence" value="ECO:0000314"/>
    <property type="project" value="UniProtKB"/>
</dbReference>
<dbReference type="GO" id="GO:0016485">
    <property type="term" value="P:protein processing"/>
    <property type="evidence" value="ECO:0000318"/>
    <property type="project" value="GO_Central"/>
</dbReference>
<dbReference type="GO" id="GO:0015031">
    <property type="term" value="P:protein transport"/>
    <property type="evidence" value="ECO:0007669"/>
    <property type="project" value="UniProtKB-KW"/>
</dbReference>
<dbReference type="GO" id="GO:0006508">
    <property type="term" value="P:proteolysis"/>
    <property type="evidence" value="ECO:0000314"/>
    <property type="project" value="UniProtKB"/>
</dbReference>
<dbReference type="InterPro" id="IPR046793">
    <property type="entry name" value="ATG4_LIR"/>
</dbReference>
<dbReference type="InterPro" id="IPR038765">
    <property type="entry name" value="Papain-like_cys_pep_sf"/>
</dbReference>
<dbReference type="InterPro" id="IPR005078">
    <property type="entry name" value="Peptidase_C54"/>
</dbReference>
<dbReference type="InterPro" id="IPR046792">
    <property type="entry name" value="Peptidase_C54_cat"/>
</dbReference>
<dbReference type="PANTHER" id="PTHR22624">
    <property type="entry name" value="CYSTEINE PROTEASE ATG4"/>
    <property type="match status" value="1"/>
</dbReference>
<dbReference type="PANTHER" id="PTHR22624:SF38">
    <property type="entry name" value="CYSTEINE PROTEASE ATG4C"/>
    <property type="match status" value="1"/>
</dbReference>
<dbReference type="Pfam" id="PF20166">
    <property type="entry name" value="ATG4_LIR"/>
    <property type="match status" value="1"/>
</dbReference>
<dbReference type="Pfam" id="PF03416">
    <property type="entry name" value="Peptidase_C54"/>
    <property type="match status" value="1"/>
</dbReference>
<dbReference type="SUPFAM" id="SSF54001">
    <property type="entry name" value="Cysteine proteinases"/>
    <property type="match status" value="1"/>
</dbReference>
<accession>Q96DT6</accession>
<accession>A6NLR8</accession>
<accession>D3DQ58</accession>
<accession>Q96K04</accession>
<name>ATG4C_HUMAN</name>
<organism>
    <name type="scientific">Homo sapiens</name>
    <name type="common">Human</name>
    <dbReference type="NCBI Taxonomy" id="9606"/>
    <lineage>
        <taxon>Eukaryota</taxon>
        <taxon>Metazoa</taxon>
        <taxon>Chordata</taxon>
        <taxon>Craniata</taxon>
        <taxon>Vertebrata</taxon>
        <taxon>Euteleostomi</taxon>
        <taxon>Mammalia</taxon>
        <taxon>Eutheria</taxon>
        <taxon>Euarchontoglires</taxon>
        <taxon>Primates</taxon>
        <taxon>Haplorrhini</taxon>
        <taxon>Catarrhini</taxon>
        <taxon>Hominidae</taxon>
        <taxon>Homo</taxon>
    </lineage>
</organism>
<sequence>MEATGTDEVDKLKTKFISAWNNMKYSWVLKTKTYFSRNSPVLLLGKCYHFKYEDEDKTLPAESGCTIEDHVIAGNVEEFRKDFISRIWLTYREEFPQIEGSALTTDCGWGCTLRTGQMLLAQGLILHFLGRAWTWPDALNIENSDSESWTSHTVKKFTASFEASLSGEREFKTPTISLKETIGKYSDDHEMRNEVYHRKIISWFGDSPLALFGLHQLIEYGKKSGKKAGDWYGPAVVAHILRKAVEEARHPDLQGITIYVAQDCTVYNSDVIDKQSASMTSDNADDKAVIILVPVRLGGERTNTDYLEFVKGILSLEYCVGIIGGKPKQSYYFAGFQDDSLIYMDPHYCQSFVDVSIKDFPLETFHCPSPKKMSFRKMDPSCTIGFYCRNVQDFKRASEEITKMLKFSSKEKYPLFTFVNGHSRDYDFTSTTTNEEDLFSEDEKKQLKRFSTEEFVLL</sequence>
<gene>
    <name evidence="10 15" type="primary">ATG4C</name>
    <name evidence="12" type="synonym">APG4C</name>
    <name type="synonym">AUTL1</name>
    <name evidence="15" type="synonym">AUTL3</name>
</gene>
<protein>
    <recommendedName>
        <fullName evidence="13">Cysteine protease ATG4C</fullName>
        <ecNumber evidence="4">3.4.22.-</ecNumber>
    </recommendedName>
    <alternativeName>
        <fullName>AUT-like 3 cysteine endopeptidase</fullName>
    </alternativeName>
    <alternativeName>
        <fullName evidence="9">Autophagy-related cysteine endopeptidase 3</fullName>
        <shortName evidence="9">Autophagin-3</shortName>
    </alternativeName>
    <alternativeName>
        <fullName evidence="10">Autophagy-related protein 4 homolog C</fullName>
        <shortName evidence="11">HsAPG4C</shortName>
    </alternativeName>
</protein>
<keyword id="KW-0007">Acetylation</keyword>
<keyword id="KW-0072">Autophagy</keyword>
<keyword id="KW-0963">Cytoplasm</keyword>
<keyword id="KW-0378">Hydrolase</keyword>
<keyword id="KW-0597">Phosphoprotein</keyword>
<keyword id="KW-0645">Protease</keyword>
<keyword id="KW-0653">Protein transport</keyword>
<keyword id="KW-1267">Proteomics identification</keyword>
<keyword id="KW-1185">Reference proteome</keyword>
<keyword id="KW-0788">Thiol protease</keyword>
<keyword id="KW-0813">Transport</keyword>
<keyword id="KW-0833">Ubl conjugation pathway</keyword>
<feature type="chain" id="PRO_0000215849" description="Cysteine protease ATG4C">
    <location>
        <begin position="1"/>
        <end position="458"/>
    </location>
</feature>
<feature type="active site" description="Nucleophile" evidence="2">
    <location>
        <position position="111"/>
    </location>
</feature>
<feature type="active site" evidence="2">
    <location>
        <position position="345"/>
    </location>
</feature>
<feature type="active site" evidence="2">
    <location>
        <position position="347"/>
    </location>
</feature>
<feature type="modified residue" description="N-acetylmethionine" evidence="16">
    <location>
        <position position="1"/>
    </location>
</feature>
<feature type="modified residue" description="Phosphoserine" evidence="17">
    <location>
        <position position="451"/>
    </location>
</feature>
<feature type="modified residue" description="Phosphothreonine" evidence="17">
    <location>
        <position position="452"/>
    </location>
</feature>
<proteinExistence type="evidence at protein level"/>
<reference key="1">
    <citation type="journal article" date="2003" name="J. Biol. Chem.">
        <title>Human autophagins, a family of cysteine proteinases potentially implicated in cell degradation by autophagy.</title>
        <authorList>
            <person name="Marino G."/>
            <person name="Uria J.A."/>
            <person name="Puente X.S."/>
            <person name="Quesada V."/>
            <person name="Bordallo J."/>
            <person name="Lopez-Otin C."/>
        </authorList>
    </citation>
    <scope>RETRACTED PAPER</scope>
    <source>
        <tissue>Brain</tissue>
    </source>
</reference>
<reference key="2">
    <citation type="journal article" date="2019" name="J. Biol. Chem.">
        <authorList>
            <person name="Marino G."/>
            <person name="Uria J.A."/>
            <person name="Puente X.S."/>
            <person name="Quesada V."/>
            <person name="Bordallo J."/>
            <person name="Lopez-Otin C."/>
        </authorList>
    </citation>
    <scope>RETRACTION NOTICE OF PUBMED:12446702</scope>
</reference>
<reference key="3">
    <citation type="submission" date="2001-07" db="EMBL/GenBank/DDBJ databases">
        <title>Cloning and sequencing of a human homologue of the yeast Apg4 cysteine endopeptidase involved in autophagy.</title>
        <authorList>
            <person name="Chen J.M."/>
            <person name="Barrett A.J."/>
        </authorList>
    </citation>
    <scope>NUCLEOTIDE SEQUENCE [MRNA]</scope>
    <source>
        <tissue>Heart</tissue>
    </source>
</reference>
<reference key="4">
    <citation type="journal article" date="2004" name="Nat. Genet.">
        <title>Complete sequencing and characterization of 21,243 full-length human cDNAs.</title>
        <authorList>
            <person name="Ota T."/>
            <person name="Suzuki Y."/>
            <person name="Nishikawa T."/>
            <person name="Otsuki T."/>
            <person name="Sugiyama T."/>
            <person name="Irie R."/>
            <person name="Wakamatsu A."/>
            <person name="Hayashi K."/>
            <person name="Sato H."/>
            <person name="Nagai K."/>
            <person name="Kimura K."/>
            <person name="Makita H."/>
            <person name="Sekine M."/>
            <person name="Obayashi M."/>
            <person name="Nishi T."/>
            <person name="Shibahara T."/>
            <person name="Tanaka T."/>
            <person name="Ishii S."/>
            <person name="Yamamoto J."/>
            <person name="Saito K."/>
            <person name="Kawai Y."/>
            <person name="Isono Y."/>
            <person name="Nakamura Y."/>
            <person name="Nagahari K."/>
            <person name="Murakami K."/>
            <person name="Yasuda T."/>
            <person name="Iwayanagi T."/>
            <person name="Wagatsuma M."/>
            <person name="Shiratori A."/>
            <person name="Sudo H."/>
            <person name="Hosoiri T."/>
            <person name="Kaku Y."/>
            <person name="Kodaira H."/>
            <person name="Kondo H."/>
            <person name="Sugawara M."/>
            <person name="Takahashi M."/>
            <person name="Kanda K."/>
            <person name="Yokoi T."/>
            <person name="Furuya T."/>
            <person name="Kikkawa E."/>
            <person name="Omura Y."/>
            <person name="Abe K."/>
            <person name="Kamihara K."/>
            <person name="Katsuta N."/>
            <person name="Sato K."/>
            <person name="Tanikawa M."/>
            <person name="Yamazaki M."/>
            <person name="Ninomiya K."/>
            <person name="Ishibashi T."/>
            <person name="Yamashita H."/>
            <person name="Murakawa K."/>
            <person name="Fujimori K."/>
            <person name="Tanai H."/>
            <person name="Kimata M."/>
            <person name="Watanabe M."/>
            <person name="Hiraoka S."/>
            <person name="Chiba Y."/>
            <person name="Ishida S."/>
            <person name="Ono Y."/>
            <person name="Takiguchi S."/>
            <person name="Watanabe S."/>
            <person name="Yosida M."/>
            <person name="Hotuta T."/>
            <person name="Kusano J."/>
            <person name="Kanehori K."/>
            <person name="Takahashi-Fujii A."/>
            <person name="Hara H."/>
            <person name="Tanase T.-O."/>
            <person name="Nomura Y."/>
            <person name="Togiya S."/>
            <person name="Komai F."/>
            <person name="Hara R."/>
            <person name="Takeuchi K."/>
            <person name="Arita M."/>
            <person name="Imose N."/>
            <person name="Musashino K."/>
            <person name="Yuuki H."/>
            <person name="Oshima A."/>
            <person name="Sasaki N."/>
            <person name="Aotsuka S."/>
            <person name="Yoshikawa Y."/>
            <person name="Matsunawa H."/>
            <person name="Ichihara T."/>
            <person name="Shiohata N."/>
            <person name="Sano S."/>
            <person name="Moriya S."/>
            <person name="Momiyama H."/>
            <person name="Satoh N."/>
            <person name="Takami S."/>
            <person name="Terashima Y."/>
            <person name="Suzuki O."/>
            <person name="Nakagawa S."/>
            <person name="Senoh A."/>
            <person name="Mizoguchi H."/>
            <person name="Goto Y."/>
            <person name="Shimizu F."/>
            <person name="Wakebe H."/>
            <person name="Hishigaki H."/>
            <person name="Watanabe T."/>
            <person name="Sugiyama A."/>
            <person name="Takemoto M."/>
            <person name="Kawakami B."/>
            <person name="Yamazaki M."/>
            <person name="Watanabe K."/>
            <person name="Kumagai A."/>
            <person name="Itakura S."/>
            <person name="Fukuzumi Y."/>
            <person name="Fujimori Y."/>
            <person name="Komiyama M."/>
            <person name="Tashiro H."/>
            <person name="Tanigami A."/>
            <person name="Fujiwara T."/>
            <person name="Ono T."/>
            <person name="Yamada K."/>
            <person name="Fujii Y."/>
            <person name="Ozaki K."/>
            <person name="Hirao M."/>
            <person name="Ohmori Y."/>
            <person name="Kawabata A."/>
            <person name="Hikiji T."/>
            <person name="Kobatake N."/>
            <person name="Inagaki H."/>
            <person name="Ikema Y."/>
            <person name="Okamoto S."/>
            <person name="Okitani R."/>
            <person name="Kawakami T."/>
            <person name="Noguchi S."/>
            <person name="Itoh T."/>
            <person name="Shigeta K."/>
            <person name="Senba T."/>
            <person name="Matsumura K."/>
            <person name="Nakajima Y."/>
            <person name="Mizuno T."/>
            <person name="Morinaga M."/>
            <person name="Sasaki M."/>
            <person name="Togashi T."/>
            <person name="Oyama M."/>
            <person name="Hata H."/>
            <person name="Watanabe M."/>
            <person name="Komatsu T."/>
            <person name="Mizushima-Sugano J."/>
            <person name="Satoh T."/>
            <person name="Shirai Y."/>
            <person name="Takahashi Y."/>
            <person name="Nakagawa K."/>
            <person name="Okumura K."/>
            <person name="Nagase T."/>
            <person name="Nomura N."/>
            <person name="Kikuchi H."/>
            <person name="Masuho Y."/>
            <person name="Yamashita R."/>
            <person name="Nakai K."/>
            <person name="Yada T."/>
            <person name="Nakamura Y."/>
            <person name="Ohara O."/>
            <person name="Isogai T."/>
            <person name="Sugano S."/>
        </authorList>
    </citation>
    <scope>NUCLEOTIDE SEQUENCE [LARGE SCALE MRNA]</scope>
    <source>
        <tissue>Placenta</tissue>
    </source>
</reference>
<reference key="5">
    <citation type="journal article" date="2006" name="Nature">
        <title>The DNA sequence and biological annotation of human chromosome 1.</title>
        <authorList>
            <person name="Gregory S.G."/>
            <person name="Barlow K.F."/>
            <person name="McLay K.E."/>
            <person name="Kaul R."/>
            <person name="Swarbreck D."/>
            <person name="Dunham A."/>
            <person name="Scott C.E."/>
            <person name="Howe K.L."/>
            <person name="Woodfine K."/>
            <person name="Spencer C.C.A."/>
            <person name="Jones M.C."/>
            <person name="Gillson C."/>
            <person name="Searle S."/>
            <person name="Zhou Y."/>
            <person name="Kokocinski F."/>
            <person name="McDonald L."/>
            <person name="Evans R."/>
            <person name="Phillips K."/>
            <person name="Atkinson A."/>
            <person name="Cooper R."/>
            <person name="Jones C."/>
            <person name="Hall R.E."/>
            <person name="Andrews T.D."/>
            <person name="Lloyd C."/>
            <person name="Ainscough R."/>
            <person name="Almeida J.P."/>
            <person name="Ambrose K.D."/>
            <person name="Anderson F."/>
            <person name="Andrew R.W."/>
            <person name="Ashwell R.I.S."/>
            <person name="Aubin K."/>
            <person name="Babbage A.K."/>
            <person name="Bagguley C.L."/>
            <person name="Bailey J."/>
            <person name="Beasley H."/>
            <person name="Bethel G."/>
            <person name="Bird C.P."/>
            <person name="Bray-Allen S."/>
            <person name="Brown J.Y."/>
            <person name="Brown A.J."/>
            <person name="Buckley D."/>
            <person name="Burton J."/>
            <person name="Bye J."/>
            <person name="Carder C."/>
            <person name="Chapman J.C."/>
            <person name="Clark S.Y."/>
            <person name="Clarke G."/>
            <person name="Clee C."/>
            <person name="Cobley V."/>
            <person name="Collier R.E."/>
            <person name="Corby N."/>
            <person name="Coville G.J."/>
            <person name="Davies J."/>
            <person name="Deadman R."/>
            <person name="Dunn M."/>
            <person name="Earthrowl M."/>
            <person name="Ellington A.G."/>
            <person name="Errington H."/>
            <person name="Frankish A."/>
            <person name="Frankland J."/>
            <person name="French L."/>
            <person name="Garner P."/>
            <person name="Garnett J."/>
            <person name="Gay L."/>
            <person name="Ghori M.R.J."/>
            <person name="Gibson R."/>
            <person name="Gilby L.M."/>
            <person name="Gillett W."/>
            <person name="Glithero R.J."/>
            <person name="Grafham D.V."/>
            <person name="Griffiths C."/>
            <person name="Griffiths-Jones S."/>
            <person name="Grocock R."/>
            <person name="Hammond S."/>
            <person name="Harrison E.S.I."/>
            <person name="Hart E."/>
            <person name="Haugen E."/>
            <person name="Heath P.D."/>
            <person name="Holmes S."/>
            <person name="Holt K."/>
            <person name="Howden P.J."/>
            <person name="Hunt A.R."/>
            <person name="Hunt S.E."/>
            <person name="Hunter G."/>
            <person name="Isherwood J."/>
            <person name="James R."/>
            <person name="Johnson C."/>
            <person name="Johnson D."/>
            <person name="Joy A."/>
            <person name="Kay M."/>
            <person name="Kershaw J.K."/>
            <person name="Kibukawa M."/>
            <person name="Kimberley A.M."/>
            <person name="King A."/>
            <person name="Knights A.J."/>
            <person name="Lad H."/>
            <person name="Laird G."/>
            <person name="Lawlor S."/>
            <person name="Leongamornlert D.A."/>
            <person name="Lloyd D.M."/>
            <person name="Loveland J."/>
            <person name="Lovell J."/>
            <person name="Lush M.J."/>
            <person name="Lyne R."/>
            <person name="Martin S."/>
            <person name="Mashreghi-Mohammadi M."/>
            <person name="Matthews L."/>
            <person name="Matthews N.S.W."/>
            <person name="McLaren S."/>
            <person name="Milne S."/>
            <person name="Mistry S."/>
            <person name="Moore M.J.F."/>
            <person name="Nickerson T."/>
            <person name="O'Dell C.N."/>
            <person name="Oliver K."/>
            <person name="Palmeiri A."/>
            <person name="Palmer S.A."/>
            <person name="Parker A."/>
            <person name="Patel D."/>
            <person name="Pearce A.V."/>
            <person name="Peck A.I."/>
            <person name="Pelan S."/>
            <person name="Phelps K."/>
            <person name="Phillimore B.J."/>
            <person name="Plumb R."/>
            <person name="Rajan J."/>
            <person name="Raymond C."/>
            <person name="Rouse G."/>
            <person name="Saenphimmachak C."/>
            <person name="Sehra H.K."/>
            <person name="Sheridan E."/>
            <person name="Shownkeen R."/>
            <person name="Sims S."/>
            <person name="Skuce C.D."/>
            <person name="Smith M."/>
            <person name="Steward C."/>
            <person name="Subramanian S."/>
            <person name="Sycamore N."/>
            <person name="Tracey A."/>
            <person name="Tromans A."/>
            <person name="Van Helmond Z."/>
            <person name="Wall M."/>
            <person name="Wallis J.M."/>
            <person name="White S."/>
            <person name="Whitehead S.L."/>
            <person name="Wilkinson J.E."/>
            <person name="Willey D.L."/>
            <person name="Williams H."/>
            <person name="Wilming L."/>
            <person name="Wray P.W."/>
            <person name="Wu Z."/>
            <person name="Coulson A."/>
            <person name="Vaudin M."/>
            <person name="Sulston J.E."/>
            <person name="Durbin R.M."/>
            <person name="Hubbard T."/>
            <person name="Wooster R."/>
            <person name="Dunham I."/>
            <person name="Carter N.P."/>
            <person name="McVean G."/>
            <person name="Ross M.T."/>
            <person name="Harrow J."/>
            <person name="Olson M.V."/>
            <person name="Beck S."/>
            <person name="Rogers J."/>
            <person name="Bentley D.R."/>
        </authorList>
    </citation>
    <scope>NUCLEOTIDE SEQUENCE [LARGE SCALE GENOMIC DNA]</scope>
</reference>
<reference key="6">
    <citation type="submission" date="2005-09" db="EMBL/GenBank/DDBJ databases">
        <authorList>
            <person name="Mural R.J."/>
            <person name="Istrail S."/>
            <person name="Sutton G.G."/>
            <person name="Florea L."/>
            <person name="Halpern A.L."/>
            <person name="Mobarry C.M."/>
            <person name="Lippert R."/>
            <person name="Walenz B."/>
            <person name="Shatkay H."/>
            <person name="Dew I."/>
            <person name="Miller J.R."/>
            <person name="Flanigan M.J."/>
            <person name="Edwards N.J."/>
            <person name="Bolanos R."/>
            <person name="Fasulo D."/>
            <person name="Halldorsson B.V."/>
            <person name="Hannenhalli S."/>
            <person name="Turner R."/>
            <person name="Yooseph S."/>
            <person name="Lu F."/>
            <person name="Nusskern D.R."/>
            <person name="Shue B.C."/>
            <person name="Zheng X.H."/>
            <person name="Zhong F."/>
            <person name="Delcher A.L."/>
            <person name="Huson D.H."/>
            <person name="Kravitz S.A."/>
            <person name="Mouchard L."/>
            <person name="Reinert K."/>
            <person name="Remington K.A."/>
            <person name="Clark A.G."/>
            <person name="Waterman M.S."/>
            <person name="Eichler E.E."/>
            <person name="Adams M.D."/>
            <person name="Hunkapiller M.W."/>
            <person name="Myers E.W."/>
            <person name="Venter J.C."/>
        </authorList>
    </citation>
    <scope>NUCLEOTIDE SEQUENCE [LARGE SCALE GENOMIC DNA]</scope>
</reference>
<reference key="7">
    <citation type="journal article" date="2004" name="Genome Res.">
        <title>The status, quality, and expansion of the NIH full-length cDNA project: the Mammalian Gene Collection (MGC).</title>
        <authorList>
            <consortium name="The MGC Project Team"/>
        </authorList>
    </citation>
    <scope>NUCLEOTIDE SEQUENCE [LARGE SCALE MRNA]</scope>
    <source>
        <tissue>Testis</tissue>
    </source>
</reference>
<reference key="8">
    <citation type="journal article" date="2009" name="Anal. Chem.">
        <title>Lys-N and trypsin cover complementary parts of the phosphoproteome in a refined SCX-based approach.</title>
        <authorList>
            <person name="Gauci S."/>
            <person name="Helbig A.O."/>
            <person name="Slijper M."/>
            <person name="Krijgsveld J."/>
            <person name="Heck A.J."/>
            <person name="Mohammed S."/>
        </authorList>
    </citation>
    <scope>ACETYLATION [LARGE SCALE ANALYSIS] AT MET-1</scope>
    <scope>IDENTIFICATION BY MASS SPECTROMETRY [LARGE SCALE ANALYSIS]</scope>
</reference>
<reference key="9">
    <citation type="journal article" date="2011" name="J. Biol. Chem.">
        <title>Kinetics comparisons of mammalian Atg4 homologues indicate selective preferences toward diverse Atg8 substrates.</title>
        <authorList>
            <person name="Li M."/>
            <person name="Hou Y."/>
            <person name="Wang J."/>
            <person name="Chen X."/>
            <person name="Shao Z.M."/>
            <person name="Yin X.M."/>
        </authorList>
    </citation>
    <scope>FUNCTION</scope>
    <scope>BIOPHYSICOCHEMICAL PROPERTIES</scope>
    <scope>ACTIVITY REGULATION</scope>
</reference>
<reference key="10">
    <citation type="journal article" date="2013" name="J. Proteome Res.">
        <title>Toward a comprehensive characterization of a human cancer cell phosphoproteome.</title>
        <authorList>
            <person name="Zhou H."/>
            <person name="Di Palma S."/>
            <person name="Preisinger C."/>
            <person name="Peng M."/>
            <person name="Polat A.N."/>
            <person name="Heck A.J."/>
            <person name="Mohammed S."/>
        </authorList>
    </citation>
    <scope>PHOSPHORYLATION [LARGE SCALE ANALYSIS] AT SER-451 AND THR-452</scope>
    <scope>IDENTIFICATION BY MASS SPECTROMETRY [LARGE SCALE ANALYSIS]</scope>
    <source>
        <tissue>Erythroleukemia</tissue>
    </source>
</reference>
<reference key="11">
    <citation type="journal article" date="2018" name="Autophagy">
        <title>Delipidation of mammalian Atg8-family proteins by each of the four ATG4 proteases.</title>
        <authorList>
            <person name="Kauffman K.J."/>
            <person name="Yu S."/>
            <person name="Jin J."/>
            <person name="Mugo B."/>
            <person name="Nguyen N."/>
            <person name="O'Brien A."/>
            <person name="Nag S."/>
            <person name="Lystad A.H."/>
            <person name="Melia T.J."/>
        </authorList>
    </citation>
    <scope>FUNCTION</scope>
    <scope>CATALYTIC ACTIVITY</scope>
</reference>
<reference key="12">
    <citation type="journal article" date="2019" name="Autophagy">
        <title>Redundancy of human ATG4 protease isoforms in autophagy and LC3/GABARAP processing revealed in cells.</title>
        <authorList>
            <person name="Agrotis A."/>
            <person name="Pengo N."/>
            <person name="Burden J.J."/>
            <person name="Ketteler R."/>
        </authorList>
    </citation>
    <scope>FUNCTION</scope>
</reference>
<reference key="13">
    <citation type="journal article" date="2021" name="Mol. Cell">
        <title>ATG4 family proteins drive phagophore growth independently of the LC3/GABARAP lipidation system.</title>
        <authorList>
            <person name="Nguyen T.N."/>
            <person name="Padman B.S."/>
            <person name="Zellner S."/>
            <person name="Khuu G."/>
            <person name="Uoselis L."/>
            <person name="Lam W.K."/>
            <person name="Skulsuppaisarn M."/>
            <person name="Lindblom R.S.J."/>
            <person name="Watts E.M."/>
            <person name="Behrends C."/>
            <person name="Lazarou M."/>
        </authorList>
    </citation>
    <scope>FUNCTION</scope>
</reference>
<reference key="14">
    <citation type="journal article" date="2021" name="Mol. Cell">
        <title>Non-canonical autophagy drives alternative ATG8 conjugation to phosphatidylserine.</title>
        <authorList>
            <person name="Durgan J."/>
            <person name="Lystad A.H."/>
            <person name="Sloan K."/>
            <person name="Carlsson S.R."/>
            <person name="Wilson M.I."/>
            <person name="Marcassa E."/>
            <person name="Ulferts R."/>
            <person name="Webster J."/>
            <person name="Lopez-Clavijo A.F."/>
            <person name="Wakelam M.J."/>
            <person name="Beale R."/>
            <person name="Simonsen A."/>
            <person name="Oxley D."/>
            <person name="Florey O."/>
        </authorList>
    </citation>
    <scope>FUNCTION</scope>
    <scope>CATALYTIC ACTIVITY</scope>
</reference>
<comment type="function">
    <text evidence="2 4 5 6 7 8">Cysteine protease that plays a key role in autophagy by mediating both proteolytic activation and delipidation of ATG8 family proteins (PubMed:21177865, PubMed:29458288, PubMed:30661429). The protease activity is required for proteolytic activation of ATG8 family proteins: cleaves the C-terminal amino acid of ATG8 proteins MAP1LC3 and GABARAPL2, to reveal a C-terminal glycine (PubMed:21177865). Exposure of the glycine at the C-terminus is essential for ATG8 proteins conjugation to phosphatidylethanolamine (PE) and insertion to membranes, which is necessary for autophagy (By similarity). In addition to the protease activity, also mediates delipidation of ATG8 family proteins (PubMed:29458288, PubMed:33909989). Catalyzes delipidation of PE-conjugated forms of ATG8 proteins during macroautophagy (PubMed:29458288, PubMed:33909989). Compared to ATG4B, the major protein for proteolytic activation of ATG8 proteins, shows weaker ability to cleave the C-terminal amino acid of ATG8 proteins, while it displays stronger delipidation activity (PubMed:29458288). In contrast to other members of the family, weakly or not involved in phagophore growth during mitophagy (PubMed:33773106).</text>
</comment>
<comment type="catalytic activity">
    <reaction evidence="5 8">
        <text>[protein]-C-terminal L-amino acid-glycyl-phosphatidylethanolamide + H2O = [protein]-C-terminal L-amino acid-glycine + a 1,2-diacyl-sn-glycero-3-phosphoethanolamine</text>
        <dbReference type="Rhea" id="RHEA:67548"/>
        <dbReference type="Rhea" id="RHEA-COMP:17323"/>
        <dbReference type="Rhea" id="RHEA-COMP:17324"/>
        <dbReference type="ChEBI" id="CHEBI:15377"/>
        <dbReference type="ChEBI" id="CHEBI:64612"/>
        <dbReference type="ChEBI" id="CHEBI:172940"/>
        <dbReference type="ChEBI" id="CHEBI:172941"/>
    </reaction>
    <physiologicalReaction direction="left-to-right" evidence="5 8">
        <dbReference type="Rhea" id="RHEA:67549"/>
    </physiologicalReaction>
</comment>
<comment type="activity regulation">
    <text evidence="4">Inhibited by N-ethylmaleimide.</text>
</comment>
<comment type="biophysicochemical properties">
    <kinetics>
        <KM evidence="4">47.5 uM for MAP1LC3B</KM>
        <KM evidence="4">12.4 uM for GABARAPL2</KM>
    </kinetics>
</comment>
<comment type="interaction">
    <interactant intactId="EBI-3225845">
        <id>Q96DT6</id>
    </interactant>
    <interactant intactId="EBI-466029">
        <id>P42858</id>
        <label>HTT</label>
    </interactant>
    <organismsDiffer>false</organismsDiffer>
    <experiments>15</experiments>
</comment>
<comment type="subcellular location">
    <subcellularLocation>
        <location evidence="1">Cytoplasm</location>
    </subcellularLocation>
</comment>
<comment type="similarity">
    <text evidence="13">Belongs to the peptidase C54 family.</text>
</comment>
<comment type="caution">
    <text evidence="3 14">A paper describing ATG4C tissue expression and activity has been retracted, due to concerns of image duplication in some of the figures.</text>
</comment>
<comment type="sequence caution" evidence="13">
    <conflict type="frameshift">
        <sequence resource="EMBL-CDS" id="BAB55356"/>
    </conflict>
</comment>
<evidence type="ECO:0000250" key="1">
    <source>
        <dbReference type="UniProtKB" id="Q8BGE6"/>
    </source>
</evidence>
<evidence type="ECO:0000250" key="2">
    <source>
        <dbReference type="UniProtKB" id="Q9Y4P1"/>
    </source>
</evidence>
<evidence type="ECO:0000269" key="3">
    <source>
    </source>
</evidence>
<evidence type="ECO:0000269" key="4">
    <source>
    </source>
</evidence>
<evidence type="ECO:0000269" key="5">
    <source>
    </source>
</evidence>
<evidence type="ECO:0000269" key="6">
    <source>
    </source>
</evidence>
<evidence type="ECO:0000269" key="7">
    <source>
    </source>
</evidence>
<evidence type="ECO:0000269" key="8">
    <source>
    </source>
</evidence>
<evidence type="ECO:0000303" key="9">
    <source>
    </source>
</evidence>
<evidence type="ECO:0000303" key="10">
    <source>
    </source>
</evidence>
<evidence type="ECO:0000303" key="11">
    <source>
    </source>
</evidence>
<evidence type="ECO:0000303" key="12">
    <source ref="3"/>
</evidence>
<evidence type="ECO:0000305" key="13"/>
<evidence type="ECO:0000305" key="14">
    <source>
    </source>
</evidence>
<evidence type="ECO:0000312" key="15">
    <source>
        <dbReference type="HGNC" id="HGNC:16040"/>
    </source>
</evidence>
<evidence type="ECO:0007744" key="16">
    <source>
    </source>
</evidence>
<evidence type="ECO:0007744" key="17">
    <source>
    </source>
</evidence>